<evidence type="ECO:0000250" key="1">
    <source>
        <dbReference type="UniProtKB" id="J8G6Z1"/>
    </source>
</evidence>
<evidence type="ECO:0000250" key="2">
    <source>
        <dbReference type="UniProtKB" id="Q9WYW0"/>
    </source>
</evidence>
<evidence type="ECO:0000255" key="3">
    <source>
        <dbReference type="PROSITE-ProRule" id="PRU00236"/>
    </source>
</evidence>
<evidence type="ECO:0000269" key="4">
    <source>
    </source>
</evidence>
<evidence type="ECO:0000303" key="5">
    <source>
    </source>
</evidence>
<evidence type="ECO:0000305" key="6"/>
<evidence type="ECO:0000305" key="7">
    <source>
    </source>
</evidence>
<keyword id="KW-0051">Antiviral defense</keyword>
<keyword id="KW-0378">Hydrolase</keyword>
<keyword id="KW-0520">NAD</keyword>
<keyword id="KW-0547">Nucleotide-binding</keyword>
<accession>P0DW60</accession>
<feature type="chain" id="PRO_0000457988" description="NAD(+) hydrolase ThsA">
    <location>
        <begin position="1"/>
        <end position="478"/>
    </location>
</feature>
<feature type="domain" description="Deacetylase sirtuin-type" evidence="3">
    <location>
        <begin position="1"/>
        <end position="287"/>
    </location>
</feature>
<feature type="region of interest" description="SLOG (STALD) domain" evidence="4">
    <location>
        <begin position="288"/>
        <end position="478"/>
    </location>
</feature>
<feature type="active site" description="Proton acceptor" evidence="1">
    <location>
        <position position="148"/>
    </location>
</feature>
<feature type="binding site" evidence="2">
    <location>
        <position position="19"/>
    </location>
    <ligand>
        <name>NAD(+)</name>
        <dbReference type="ChEBI" id="CHEBI:57540"/>
    </ligand>
</feature>
<feature type="binding site" evidence="2">
    <location>
        <position position="110"/>
    </location>
    <ligand>
        <name>NAD(+)</name>
        <dbReference type="ChEBI" id="CHEBI:57540"/>
    </ligand>
</feature>
<feature type="binding site" evidence="2">
    <location>
        <position position="148"/>
    </location>
    <ligand>
        <name>NAD(+)</name>
        <dbReference type="ChEBI" id="CHEBI:57540"/>
    </ligand>
</feature>
<feature type="binding site" evidence="1">
    <location>
        <position position="292"/>
    </location>
    <ligand>
        <name>3'cADPR</name>
        <dbReference type="ChEBI" id="CHEBI:194249"/>
        <note>activator</note>
    </ligand>
</feature>
<feature type="binding site" evidence="1">
    <location>
        <position position="293"/>
    </location>
    <ligand>
        <name>3'cADPR</name>
        <dbReference type="ChEBI" id="CHEBI:194249"/>
        <note>activator</note>
    </ligand>
</feature>
<feature type="binding site" evidence="1">
    <location>
        <position position="330"/>
    </location>
    <ligand>
        <name>3'cADPR</name>
        <dbReference type="ChEBI" id="CHEBI:194249"/>
        <note>activator</note>
    </ligand>
</feature>
<feature type="binding site" evidence="1">
    <location>
        <position position="373"/>
    </location>
    <ligand>
        <name>3'cADPR</name>
        <dbReference type="ChEBI" id="CHEBI:194249"/>
        <note>activator</note>
    </ligand>
</feature>
<feature type="binding site" evidence="1">
    <location>
        <position position="390"/>
    </location>
    <ligand>
        <name>3'cADPR</name>
        <dbReference type="ChEBI" id="CHEBI:194249"/>
        <note>activator</note>
    </ligand>
</feature>
<feature type="binding site" evidence="1">
    <location>
        <position position="401"/>
    </location>
    <ligand>
        <name>3'cADPR</name>
        <dbReference type="ChEBI" id="CHEBI:194249"/>
        <note>activator</note>
    </ligand>
</feature>
<feature type="binding site" evidence="1">
    <location>
        <position position="405"/>
    </location>
    <ligand>
        <name>3'cADPR</name>
        <dbReference type="ChEBI" id="CHEBI:194249"/>
        <note>activator</note>
    </ligand>
</feature>
<feature type="mutagenesis site" description="No change in NADase activity." evidence="4">
    <original>S</original>
    <variation>A</variation>
    <location>
        <position position="293"/>
    </location>
</feature>
<feature type="mutagenesis site" description="Slower NADase activation by 3'cADPR." evidence="4">
    <original>L</original>
    <variation>A</variation>
    <location>
        <position position="361"/>
    </location>
</feature>
<feature type="mutagenesis site" description="Loss of NADase activity, not activated by 3'cADPR." evidence="4">
    <original>R</original>
    <variation>A</variation>
    <location>
        <position position="373"/>
    </location>
</feature>
<feature type="mutagenesis site" description="Slower NADase activation by 3'cADPR." evidence="4">
    <original>K</original>
    <variation>A</variation>
    <location>
        <position position="390"/>
    </location>
</feature>
<feature type="mutagenesis site" description="Loss of NADase activity, not activated by 3'cADPR." evidence="4">
    <original>E</original>
    <variation>A</variation>
    <location>
        <position position="405"/>
    </location>
</feature>
<comment type="function">
    <text evidence="1 4">NAD(+) hydrolyzing component (NADase) of the Thoeris antiviral defense system, composed of ThsA and ThsB (maybe AS248_15445). Activated by 3' cyclic ADP-D-ribose (3'cADPR) but not its isomers 2'cADPR, cADPR and very weakly by ADPR; binds 3'cADPR better than 2'cADPR (PubMed:36048923). Upon activation binds and hydrolyzes NAD(+), leading to cell death and inhibition of phage replication (By similarity).</text>
</comment>
<comment type="catalytic activity">
    <reaction evidence="4">
        <text>NAD(+) + H2O = ADP-D-ribose + nicotinamide + H(+)</text>
        <dbReference type="Rhea" id="RHEA:16301"/>
        <dbReference type="ChEBI" id="CHEBI:15377"/>
        <dbReference type="ChEBI" id="CHEBI:15378"/>
        <dbReference type="ChEBI" id="CHEBI:17154"/>
        <dbReference type="ChEBI" id="CHEBI:57540"/>
        <dbReference type="ChEBI" id="CHEBI:57967"/>
        <dbReference type="EC" id="3.2.2.5"/>
    </reaction>
    <physiologicalReaction direction="left-to-right" evidence="4">
        <dbReference type="Rhea" id="RHEA:16302"/>
    </physiologicalReaction>
</comment>
<comment type="activity regulation">
    <text evidence="4">Activated by 3'cADPR.</text>
</comment>
<comment type="subunit">
    <text evidence="4">Homotetramer in solution.</text>
</comment>
<comment type="domain">
    <text evidence="1 4 7">Has an N-terminal sirtuin-like domain (SIR2, residues 1-287) and a C-terminal SLOG (STALD)-like domain (residues 288-478) (PubMed:36048923). The SIR2 domain probably has NAD(+) hydrolase activity (Probable) (PubMed:36048923). The SLOG domain binds 3'cADPR; binding alters the protein conformation, allowing NAD(+) to access the active site (By similarity).</text>
</comment>
<comment type="similarity">
    <text evidence="6">Belongs to the soluble Thoeris ThsA family.</text>
</comment>
<dbReference type="EC" id="3.2.2.5" evidence="4"/>
<dbReference type="EMBL" id="LNMC01000072">
    <property type="protein sequence ID" value="KWY71636.1"/>
    <property type="molecule type" value="Genomic_DNA"/>
</dbReference>
<dbReference type="RefSeq" id="WP_002287699.1">
    <property type="nucleotide sequence ID" value="NZ_WXSK01000005.1"/>
</dbReference>
<dbReference type="SMR" id="P0DW60"/>
<dbReference type="GO" id="GO:0016787">
    <property type="term" value="F:hydrolase activity"/>
    <property type="evidence" value="ECO:0007669"/>
    <property type="project" value="UniProtKB-KW"/>
</dbReference>
<dbReference type="GO" id="GO:0000166">
    <property type="term" value="F:nucleotide binding"/>
    <property type="evidence" value="ECO:0007669"/>
    <property type="project" value="UniProtKB-KW"/>
</dbReference>
<dbReference type="GO" id="GO:0051607">
    <property type="term" value="P:defense response to virus"/>
    <property type="evidence" value="ECO:0007669"/>
    <property type="project" value="UniProtKB-KW"/>
</dbReference>
<dbReference type="CDD" id="cd01406">
    <property type="entry name" value="SIR2-like"/>
    <property type="match status" value="1"/>
</dbReference>
<dbReference type="InterPro" id="IPR029035">
    <property type="entry name" value="DHS-like_NAD/FAD-binding_dom"/>
</dbReference>
<dbReference type="InterPro" id="IPR026590">
    <property type="entry name" value="Ssirtuin_cat_dom"/>
</dbReference>
<dbReference type="InterPro" id="IPR041486">
    <property type="entry name" value="ThsA_STALD"/>
</dbReference>
<dbReference type="Pfam" id="PF13289">
    <property type="entry name" value="SIR2_2"/>
    <property type="match status" value="1"/>
</dbReference>
<dbReference type="Pfam" id="PF18185">
    <property type="entry name" value="STALD"/>
    <property type="match status" value="1"/>
</dbReference>
<dbReference type="SUPFAM" id="SSF52467">
    <property type="entry name" value="DHS-like NAD/FAD-binding domain"/>
    <property type="match status" value="1"/>
</dbReference>
<dbReference type="PROSITE" id="PS50305">
    <property type="entry name" value="SIRTUIN"/>
    <property type="match status" value="1"/>
</dbReference>
<sequence length="478" mass="55003">MDKKVLIKRFSEAIEKGNAAIFAGAGLSMSQGYVSWPELLNDPATEIGLDSKKETDLVTLAQYYKNENGGSRGILNQILMDNFGEELEISENHRILASLPIETYWTTNYDHLIEKSIREAYKNPQVKKNYTQLATTNPNVDTIVYKMHGDIDDVSSTVITRDDYEKYDDDSYALFKETLKGDLLTKTFLFLGFSFTDPNLERILSDIRWVLRENQRPHYCIMRKILKENFVDSEDFFDQERYNYELTKRRLQINDLSRFSINVVEVDDYSEITDILKSIRKKYLRKTIFISGSAVDYTPFTSESKGLKFVEKLAYRLSESGYRIVSGYGLGIGNSIVSGVLKQRRNLRKNNIQDVLSLRPLPLDMPHEWRRYRENIIAESGISIFVFGNKLESGEIVTADGMIEEFELSVQNENIVVPIGFTKGASKVLFDKIQENFSDYFDDSLKSKFQALEKLDTEGEVDKKVEQIVSLINSIQED</sequence>
<gene>
    <name evidence="5" type="primary">thsA</name>
    <name type="ORF">AS248_15440</name>
</gene>
<protein>
    <recommendedName>
        <fullName evidence="5">NAD(+) hydrolase ThsA</fullName>
        <shortName evidence="5">EfThsA</shortName>
        <shortName evidence="5">NADase ThsA</shortName>
        <ecNumber evidence="4">3.2.2.5</ecNumber>
    </recommendedName>
</protein>
<organism>
    <name type="scientific">Enterococcus faecium</name>
    <name type="common">Streptococcus faecium</name>
    <dbReference type="NCBI Taxonomy" id="1352"/>
    <lineage>
        <taxon>Bacteria</taxon>
        <taxon>Bacillati</taxon>
        <taxon>Bacillota</taxon>
        <taxon>Bacilli</taxon>
        <taxon>Lactobacillales</taxon>
        <taxon>Enterococcaceae</taxon>
        <taxon>Enterococcus</taxon>
    </lineage>
</organism>
<name>THSA_ENTFC</name>
<proteinExistence type="evidence at protein level"/>
<reference key="1">
    <citation type="submission" date="2015-11" db="EMBL/GenBank/DDBJ databases">
        <authorList>
            <person name="Kaden R."/>
        </authorList>
    </citation>
    <scope>NUCLEOTIDE SEQUENCE [LARGE SCALE GENOMIC DNA]</scope>
    <source>
        <strain>VRE-1402258</strain>
    </source>
</reference>
<reference key="2">
    <citation type="journal article" date="2022" name="Science">
        <title>Cyclic ADP ribose isomers: Production, chemical structures, and immune signaling.</title>
        <authorList>
            <person name="Manik M.K."/>
            <person name="Shi Y."/>
            <person name="Li S."/>
            <person name="Zaydman M.A."/>
            <person name="Damaraju N."/>
            <person name="Eastman S."/>
            <person name="Smith T.G."/>
            <person name="Gu W."/>
            <person name="Masic V."/>
            <person name="Mosaiab T."/>
            <person name="Weagley J.S."/>
            <person name="Hancock S.J."/>
            <person name="Vasquez E."/>
            <person name="Hartley-Tassell L."/>
            <person name="Kargios N."/>
            <person name="Maruta N."/>
            <person name="Lim B.Y.J."/>
            <person name="Burdett H."/>
            <person name="Landsberg M.J."/>
            <person name="Schembri M.A."/>
            <person name="Prokes I."/>
            <person name="Song L."/>
            <person name="Grant M."/>
            <person name="DiAntonio A."/>
            <person name="Nanson J.D."/>
            <person name="Guo M."/>
            <person name="Milbrandt J."/>
            <person name="Ve T."/>
            <person name="Kobe B."/>
        </authorList>
    </citation>
    <scope>FUNCTION</scope>
    <scope>CATALYTIC ACTIVITY</scope>
    <scope>ACTIVITY REGULATION</scope>
    <scope>SUBUNIT</scope>
    <scope>CADPR-BINDING</scope>
    <scope>DOMAIN</scope>
    <scope>MUTAGENESIS OF SER-293; LEU-361; ARG-373; LYS-390 AND GLU-405</scope>
    <source>
        <strain>VRE-1402258</strain>
    </source>
</reference>